<gene>
    <name type="ordered locus">BAV2243</name>
</gene>
<sequence>MARTVNCVKLKREAEGLDYPPYPGELGARIWREISKESWEEWKQIQTRLVNENRLNLADARARKYLQQQMERFLFEDGTVEAQGYVPPSA</sequence>
<accession>Q2KYQ6</accession>
<evidence type="ECO:0000255" key="1">
    <source>
        <dbReference type="HAMAP-Rule" id="MF_00686"/>
    </source>
</evidence>
<keyword id="KW-0408">Iron</keyword>
<keyword id="KW-1185">Reference proteome</keyword>
<reference key="1">
    <citation type="journal article" date="2006" name="J. Bacteriol.">
        <title>Comparison of the genome sequence of the poultry pathogen Bordetella avium with those of B. bronchiseptica, B. pertussis, and B. parapertussis reveals extensive diversity in surface structures associated with host interaction.</title>
        <authorList>
            <person name="Sebaihia M."/>
            <person name="Preston A."/>
            <person name="Maskell D.J."/>
            <person name="Kuzmiak H."/>
            <person name="Connell T.D."/>
            <person name="King N.D."/>
            <person name="Orndorff P.E."/>
            <person name="Miyamoto D.M."/>
            <person name="Thomson N.R."/>
            <person name="Harris D."/>
            <person name="Goble A."/>
            <person name="Lord A."/>
            <person name="Murphy L."/>
            <person name="Quail M.A."/>
            <person name="Rutter S."/>
            <person name="Squares R."/>
            <person name="Squares S."/>
            <person name="Woodward J."/>
            <person name="Parkhill J."/>
            <person name="Temple L.M."/>
        </authorList>
    </citation>
    <scope>NUCLEOTIDE SEQUENCE [LARGE SCALE GENOMIC DNA]</scope>
    <source>
        <strain>197N</strain>
    </source>
</reference>
<name>FETP_BORA1</name>
<dbReference type="EMBL" id="AM167904">
    <property type="protein sequence ID" value="CAJ49853.1"/>
    <property type="molecule type" value="Genomic_DNA"/>
</dbReference>
<dbReference type="RefSeq" id="WP_012417904.1">
    <property type="nucleotide sequence ID" value="NC_010645.1"/>
</dbReference>
<dbReference type="SMR" id="Q2KYQ6"/>
<dbReference type="STRING" id="360910.BAV2243"/>
<dbReference type="GeneID" id="92934644"/>
<dbReference type="KEGG" id="bav:BAV2243"/>
<dbReference type="eggNOG" id="COG2924">
    <property type="taxonomic scope" value="Bacteria"/>
</dbReference>
<dbReference type="HOGENOM" id="CLU_170994_0_0_4"/>
<dbReference type="OrthoDB" id="9804318at2"/>
<dbReference type="Proteomes" id="UP000001977">
    <property type="component" value="Chromosome"/>
</dbReference>
<dbReference type="GO" id="GO:0005829">
    <property type="term" value="C:cytosol"/>
    <property type="evidence" value="ECO:0007669"/>
    <property type="project" value="TreeGrafter"/>
</dbReference>
<dbReference type="GO" id="GO:0005506">
    <property type="term" value="F:iron ion binding"/>
    <property type="evidence" value="ECO:0007669"/>
    <property type="project" value="UniProtKB-UniRule"/>
</dbReference>
<dbReference type="GO" id="GO:0034599">
    <property type="term" value="P:cellular response to oxidative stress"/>
    <property type="evidence" value="ECO:0007669"/>
    <property type="project" value="TreeGrafter"/>
</dbReference>
<dbReference type="FunFam" id="1.10.3880.10:FF:000001">
    <property type="entry name" value="Probable Fe(2+)-trafficking protein"/>
    <property type="match status" value="1"/>
</dbReference>
<dbReference type="Gene3D" id="1.10.3880.10">
    <property type="entry name" value="Fe(II) trafficking protein YggX"/>
    <property type="match status" value="1"/>
</dbReference>
<dbReference type="HAMAP" id="MF_00686">
    <property type="entry name" value="Fe_traffic_YggX"/>
    <property type="match status" value="1"/>
</dbReference>
<dbReference type="InterPro" id="IPR007457">
    <property type="entry name" value="Fe_traffick_prot_YggX"/>
</dbReference>
<dbReference type="InterPro" id="IPR036766">
    <property type="entry name" value="Fe_traffick_prot_YggX_sf"/>
</dbReference>
<dbReference type="NCBIfam" id="NF003817">
    <property type="entry name" value="PRK05408.1"/>
    <property type="match status" value="1"/>
</dbReference>
<dbReference type="PANTHER" id="PTHR36965">
    <property type="entry name" value="FE(2+)-TRAFFICKING PROTEIN-RELATED"/>
    <property type="match status" value="1"/>
</dbReference>
<dbReference type="PANTHER" id="PTHR36965:SF1">
    <property type="entry name" value="FE(2+)-TRAFFICKING PROTEIN-RELATED"/>
    <property type="match status" value="1"/>
</dbReference>
<dbReference type="Pfam" id="PF04362">
    <property type="entry name" value="Iron_traffic"/>
    <property type="match status" value="1"/>
</dbReference>
<dbReference type="PIRSF" id="PIRSF029827">
    <property type="entry name" value="Fe_traffic_YggX"/>
    <property type="match status" value="1"/>
</dbReference>
<dbReference type="SUPFAM" id="SSF111148">
    <property type="entry name" value="YggX-like"/>
    <property type="match status" value="1"/>
</dbReference>
<organism>
    <name type="scientific">Bordetella avium (strain 197N)</name>
    <dbReference type="NCBI Taxonomy" id="360910"/>
    <lineage>
        <taxon>Bacteria</taxon>
        <taxon>Pseudomonadati</taxon>
        <taxon>Pseudomonadota</taxon>
        <taxon>Betaproteobacteria</taxon>
        <taxon>Burkholderiales</taxon>
        <taxon>Alcaligenaceae</taxon>
        <taxon>Bordetella</taxon>
    </lineage>
</organism>
<comment type="function">
    <text evidence="1">Could be a mediator in iron transactions between iron acquisition and iron-requiring processes, such as synthesis and/or repair of Fe-S clusters in biosynthetic enzymes.</text>
</comment>
<comment type="similarity">
    <text evidence="1">Belongs to the Fe(2+)-trafficking protein family.</text>
</comment>
<proteinExistence type="inferred from homology"/>
<feature type="chain" id="PRO_0000246094" description="Probable Fe(2+)-trafficking protein">
    <location>
        <begin position="1"/>
        <end position="90"/>
    </location>
</feature>
<protein>
    <recommendedName>
        <fullName evidence="1">Probable Fe(2+)-trafficking protein</fullName>
    </recommendedName>
</protein>